<reference key="1">
    <citation type="journal article" date="2003" name="Genome Res.">
        <title>Comparative complete genome sequence analysis of the amino acid replacements responsible for the thermostability of Corynebacterium efficiens.</title>
        <authorList>
            <person name="Nishio Y."/>
            <person name="Nakamura Y."/>
            <person name="Kawarabayasi Y."/>
            <person name="Usuda Y."/>
            <person name="Kimura E."/>
            <person name="Sugimoto S."/>
            <person name="Matsui K."/>
            <person name="Yamagishi A."/>
            <person name="Kikuchi H."/>
            <person name="Ikeo K."/>
            <person name="Gojobori T."/>
        </authorList>
    </citation>
    <scope>NUCLEOTIDE SEQUENCE [LARGE SCALE GENOMIC DNA]</scope>
    <source>
        <strain>DSM 44549 / YS-314 / AJ 12310 / JCM 11189 / NBRC 100395</strain>
    </source>
</reference>
<accession>Q8FMI4</accession>
<proteinExistence type="inferred from homology"/>
<name>ISPF_COREF</name>
<keyword id="KW-0414">Isoprene biosynthesis</keyword>
<keyword id="KW-0456">Lyase</keyword>
<keyword id="KW-0479">Metal-binding</keyword>
<keyword id="KW-1185">Reference proteome</keyword>
<feature type="chain" id="PRO_0000189461" description="2-C-methyl-D-erythritol 2,4-cyclodiphosphate synthase">
    <location>
        <begin position="1"/>
        <end position="171"/>
    </location>
</feature>
<feature type="binding site" evidence="1">
    <location>
        <begin position="25"/>
        <end position="27"/>
    </location>
    <ligand>
        <name>4-CDP-2-C-methyl-D-erythritol 2-phosphate</name>
        <dbReference type="ChEBI" id="CHEBI:57919"/>
    </ligand>
</feature>
<feature type="binding site" evidence="1">
    <location>
        <position position="25"/>
    </location>
    <ligand>
        <name>a divalent metal cation</name>
        <dbReference type="ChEBI" id="CHEBI:60240"/>
    </ligand>
</feature>
<feature type="binding site" evidence="1">
    <location>
        <position position="27"/>
    </location>
    <ligand>
        <name>a divalent metal cation</name>
        <dbReference type="ChEBI" id="CHEBI:60240"/>
    </ligand>
</feature>
<feature type="binding site" evidence="1">
    <location>
        <begin position="51"/>
        <end position="52"/>
    </location>
    <ligand>
        <name>4-CDP-2-C-methyl-D-erythritol 2-phosphate</name>
        <dbReference type="ChEBI" id="CHEBI:57919"/>
    </ligand>
</feature>
<feature type="binding site" evidence="1">
    <location>
        <position position="59"/>
    </location>
    <ligand>
        <name>a divalent metal cation</name>
        <dbReference type="ChEBI" id="CHEBI:60240"/>
    </ligand>
</feature>
<feature type="binding site" evidence="1">
    <location>
        <begin position="73"/>
        <end position="75"/>
    </location>
    <ligand>
        <name>4-CDP-2-C-methyl-D-erythritol 2-phosphate</name>
        <dbReference type="ChEBI" id="CHEBI:57919"/>
    </ligand>
</feature>
<feature type="binding site" evidence="1">
    <location>
        <begin position="146"/>
        <end position="149"/>
    </location>
    <ligand>
        <name>4-CDP-2-C-methyl-D-erythritol 2-phosphate</name>
        <dbReference type="ChEBI" id="CHEBI:57919"/>
    </ligand>
</feature>
<feature type="binding site" evidence="1">
    <location>
        <position position="153"/>
    </location>
    <ligand>
        <name>4-CDP-2-C-methyl-D-erythritol 2-phosphate</name>
        <dbReference type="ChEBI" id="CHEBI:57919"/>
    </ligand>
</feature>
<feature type="binding site" evidence="1">
    <location>
        <position position="156"/>
    </location>
    <ligand>
        <name>4-CDP-2-C-methyl-D-erythritol 2-phosphate</name>
        <dbReference type="ChEBI" id="CHEBI:57919"/>
    </ligand>
</feature>
<feature type="site" description="Transition state stabilizer" evidence="1">
    <location>
        <position position="51"/>
    </location>
</feature>
<feature type="site" description="Transition state stabilizer" evidence="1">
    <location>
        <position position="147"/>
    </location>
</feature>
<dbReference type="EC" id="4.6.1.12" evidence="1"/>
<dbReference type="EMBL" id="BA000035">
    <property type="protein sequence ID" value="BAC19330.1"/>
    <property type="molecule type" value="Genomic_DNA"/>
</dbReference>
<dbReference type="SMR" id="Q8FMI4"/>
<dbReference type="STRING" id="196164.gene:10742967"/>
<dbReference type="KEGG" id="cef:CE2520"/>
<dbReference type="eggNOG" id="COG0245">
    <property type="taxonomic scope" value="Bacteria"/>
</dbReference>
<dbReference type="HOGENOM" id="CLU_084630_1_0_11"/>
<dbReference type="UniPathway" id="UPA00056">
    <property type="reaction ID" value="UER00095"/>
</dbReference>
<dbReference type="Proteomes" id="UP000001409">
    <property type="component" value="Chromosome"/>
</dbReference>
<dbReference type="GO" id="GO:0008685">
    <property type="term" value="F:2-C-methyl-D-erythritol 2,4-cyclodiphosphate synthase activity"/>
    <property type="evidence" value="ECO:0007669"/>
    <property type="project" value="UniProtKB-UniRule"/>
</dbReference>
<dbReference type="GO" id="GO:0046872">
    <property type="term" value="F:metal ion binding"/>
    <property type="evidence" value="ECO:0007669"/>
    <property type="project" value="UniProtKB-KW"/>
</dbReference>
<dbReference type="GO" id="GO:0019288">
    <property type="term" value="P:isopentenyl diphosphate biosynthetic process, methylerythritol 4-phosphate pathway"/>
    <property type="evidence" value="ECO:0007669"/>
    <property type="project" value="UniProtKB-UniRule"/>
</dbReference>
<dbReference type="GO" id="GO:0016114">
    <property type="term" value="P:terpenoid biosynthetic process"/>
    <property type="evidence" value="ECO:0007669"/>
    <property type="project" value="InterPro"/>
</dbReference>
<dbReference type="CDD" id="cd00554">
    <property type="entry name" value="MECDP_synthase"/>
    <property type="match status" value="1"/>
</dbReference>
<dbReference type="FunFam" id="3.30.1330.50:FF:000003">
    <property type="entry name" value="2-C-methyl-D-erythritol 2,4-cyclodiphosphate synthase"/>
    <property type="match status" value="1"/>
</dbReference>
<dbReference type="Gene3D" id="3.30.1330.50">
    <property type="entry name" value="2-C-methyl-D-erythritol 2,4-cyclodiphosphate synthase"/>
    <property type="match status" value="1"/>
</dbReference>
<dbReference type="HAMAP" id="MF_00107">
    <property type="entry name" value="IspF"/>
    <property type="match status" value="1"/>
</dbReference>
<dbReference type="InterPro" id="IPR003526">
    <property type="entry name" value="MECDP_synthase"/>
</dbReference>
<dbReference type="InterPro" id="IPR020555">
    <property type="entry name" value="MECDP_synthase_CS"/>
</dbReference>
<dbReference type="InterPro" id="IPR036571">
    <property type="entry name" value="MECDP_synthase_sf"/>
</dbReference>
<dbReference type="NCBIfam" id="TIGR00151">
    <property type="entry name" value="ispF"/>
    <property type="match status" value="1"/>
</dbReference>
<dbReference type="PANTHER" id="PTHR43181">
    <property type="entry name" value="2-C-METHYL-D-ERYTHRITOL 2,4-CYCLODIPHOSPHATE SYNTHASE, CHLOROPLASTIC"/>
    <property type="match status" value="1"/>
</dbReference>
<dbReference type="PANTHER" id="PTHR43181:SF1">
    <property type="entry name" value="2-C-METHYL-D-ERYTHRITOL 2,4-CYCLODIPHOSPHATE SYNTHASE, CHLOROPLASTIC"/>
    <property type="match status" value="1"/>
</dbReference>
<dbReference type="Pfam" id="PF02542">
    <property type="entry name" value="YgbB"/>
    <property type="match status" value="1"/>
</dbReference>
<dbReference type="SUPFAM" id="SSF69765">
    <property type="entry name" value="IpsF-like"/>
    <property type="match status" value="1"/>
</dbReference>
<dbReference type="PROSITE" id="PS01350">
    <property type="entry name" value="ISPF"/>
    <property type="match status" value="1"/>
</dbReference>
<organism>
    <name type="scientific">Corynebacterium efficiens (strain DSM 44549 / YS-314 / AJ 12310 / JCM 11189 / NBRC 100395)</name>
    <dbReference type="NCBI Taxonomy" id="196164"/>
    <lineage>
        <taxon>Bacteria</taxon>
        <taxon>Bacillati</taxon>
        <taxon>Actinomycetota</taxon>
        <taxon>Actinomycetes</taxon>
        <taxon>Mycobacteriales</taxon>
        <taxon>Corynebacteriaceae</taxon>
        <taxon>Corynebacterium</taxon>
    </lineage>
</organism>
<evidence type="ECO:0000255" key="1">
    <source>
        <dbReference type="HAMAP-Rule" id="MF_00107"/>
    </source>
</evidence>
<gene>
    <name evidence="1" type="primary">ispF</name>
    <name type="ordered locus">CE2520</name>
</gene>
<protein>
    <recommendedName>
        <fullName evidence="1">2-C-methyl-D-erythritol 2,4-cyclodiphosphate synthase</fullName>
        <shortName evidence="1">MECDP-synthase</shortName>
        <shortName evidence="1">MECPP-synthase</shortName>
        <shortName evidence="1">MECPS</shortName>
        <ecNumber evidence="1">4.6.1.12</ecNumber>
    </recommendedName>
</protein>
<sequence length="171" mass="18077">MRQNRRFLRCQVTEQIIPRVGIASDAHQIEAGKPCWIACLLFDGVDGCEGHSDGDVVAHAIVDALLSASGLGDLGSFVGVGRPEYDGVSGTQLLIEVRELLITRGFTIGNVAAQLVGQTPKFGPRREEAQQVISDILGAPCFLSATTTDHMGFTGRGEGRAALATAVVWTG</sequence>
<comment type="function">
    <text evidence="1">Involved in the biosynthesis of isopentenyl diphosphate (IPP) and dimethylallyl diphosphate (DMAPP), two major building blocks of isoprenoid compounds. Catalyzes the conversion of 4-diphosphocytidyl-2-C-methyl-D-erythritol 2-phosphate (CDP-ME2P) to 2-C-methyl-D-erythritol 2,4-cyclodiphosphate (ME-CPP) with a corresponding release of cytidine 5-monophosphate (CMP).</text>
</comment>
<comment type="catalytic activity">
    <reaction evidence="1">
        <text>4-CDP-2-C-methyl-D-erythritol 2-phosphate = 2-C-methyl-D-erythritol 2,4-cyclic diphosphate + CMP</text>
        <dbReference type="Rhea" id="RHEA:23864"/>
        <dbReference type="ChEBI" id="CHEBI:57919"/>
        <dbReference type="ChEBI" id="CHEBI:58483"/>
        <dbReference type="ChEBI" id="CHEBI:60377"/>
        <dbReference type="EC" id="4.6.1.12"/>
    </reaction>
</comment>
<comment type="cofactor">
    <cofactor evidence="1">
        <name>a divalent metal cation</name>
        <dbReference type="ChEBI" id="CHEBI:60240"/>
    </cofactor>
    <text evidence="1">Binds 1 divalent metal cation per subunit.</text>
</comment>
<comment type="pathway">
    <text evidence="1">Isoprenoid biosynthesis; isopentenyl diphosphate biosynthesis via DXP pathway; isopentenyl diphosphate from 1-deoxy-D-xylulose 5-phosphate: step 4/6.</text>
</comment>
<comment type="subunit">
    <text evidence="1">Homotrimer.</text>
</comment>
<comment type="similarity">
    <text evidence="1">Belongs to the IspF family.</text>
</comment>